<protein>
    <recommendedName>
        <fullName>FHA domain-containing protein DDL</fullName>
    </recommendedName>
    <alternativeName>
        <fullName>Protein DAWDLE</fullName>
    </alternativeName>
</protein>
<organism>
    <name type="scientific">Arabidopsis thaliana</name>
    <name type="common">Mouse-ear cress</name>
    <dbReference type="NCBI Taxonomy" id="3702"/>
    <lineage>
        <taxon>Eukaryota</taxon>
        <taxon>Viridiplantae</taxon>
        <taxon>Streptophyta</taxon>
        <taxon>Embryophyta</taxon>
        <taxon>Tracheophyta</taxon>
        <taxon>Spermatophyta</taxon>
        <taxon>Magnoliopsida</taxon>
        <taxon>eudicotyledons</taxon>
        <taxon>Gunneridae</taxon>
        <taxon>Pentapetalae</taxon>
        <taxon>rosids</taxon>
        <taxon>malvids</taxon>
        <taxon>Brassicales</taxon>
        <taxon>Brassicaceae</taxon>
        <taxon>Camelineae</taxon>
        <taxon>Arabidopsis</taxon>
    </lineage>
</organism>
<accession>Q8W4D8</accession>
<accession>Q9LJU3</accession>
<reference key="1">
    <citation type="journal article" date="2000" name="DNA Res.">
        <title>Structural analysis of Arabidopsis thaliana chromosome 3. II. Sequence features of the 4,251,695 bp regions covered by 90 P1, TAC and BAC clones.</title>
        <authorList>
            <person name="Kaneko T."/>
            <person name="Katoh T."/>
            <person name="Sato S."/>
            <person name="Nakamura Y."/>
            <person name="Asamizu E."/>
            <person name="Tabata S."/>
        </authorList>
    </citation>
    <scope>NUCLEOTIDE SEQUENCE [LARGE SCALE GENOMIC DNA]</scope>
    <source>
        <strain>cv. Columbia</strain>
    </source>
</reference>
<reference key="2">
    <citation type="journal article" date="2017" name="Plant J.">
        <title>Araport11: a complete reannotation of the Arabidopsis thaliana reference genome.</title>
        <authorList>
            <person name="Cheng C.Y."/>
            <person name="Krishnakumar V."/>
            <person name="Chan A.P."/>
            <person name="Thibaud-Nissen F."/>
            <person name="Schobel S."/>
            <person name="Town C.D."/>
        </authorList>
    </citation>
    <scope>GENOME REANNOTATION</scope>
    <source>
        <strain>cv. Columbia</strain>
    </source>
</reference>
<reference key="3">
    <citation type="journal article" date="2003" name="Science">
        <title>Empirical analysis of transcriptional activity in the Arabidopsis genome.</title>
        <authorList>
            <person name="Yamada K."/>
            <person name="Lim J."/>
            <person name="Dale J.M."/>
            <person name="Chen H."/>
            <person name="Shinn P."/>
            <person name="Palm C.J."/>
            <person name="Southwick A.M."/>
            <person name="Wu H.C."/>
            <person name="Kim C.J."/>
            <person name="Nguyen M."/>
            <person name="Pham P.K."/>
            <person name="Cheuk R.F."/>
            <person name="Karlin-Newmann G."/>
            <person name="Liu S.X."/>
            <person name="Lam B."/>
            <person name="Sakano H."/>
            <person name="Wu T."/>
            <person name="Yu G."/>
            <person name="Miranda M."/>
            <person name="Quach H.L."/>
            <person name="Tripp M."/>
            <person name="Chang C.H."/>
            <person name="Lee J.M."/>
            <person name="Toriumi M.J."/>
            <person name="Chan M.M."/>
            <person name="Tang C.C."/>
            <person name="Onodera C.S."/>
            <person name="Deng J.M."/>
            <person name="Akiyama K."/>
            <person name="Ansari Y."/>
            <person name="Arakawa T."/>
            <person name="Banh J."/>
            <person name="Banno F."/>
            <person name="Bowser L."/>
            <person name="Brooks S.Y."/>
            <person name="Carninci P."/>
            <person name="Chao Q."/>
            <person name="Choy N."/>
            <person name="Enju A."/>
            <person name="Goldsmith A.D."/>
            <person name="Gurjal M."/>
            <person name="Hansen N.F."/>
            <person name="Hayashizaki Y."/>
            <person name="Johnson-Hopson C."/>
            <person name="Hsuan V.W."/>
            <person name="Iida K."/>
            <person name="Karnes M."/>
            <person name="Khan S."/>
            <person name="Koesema E."/>
            <person name="Ishida J."/>
            <person name="Jiang P.X."/>
            <person name="Jones T."/>
            <person name="Kawai J."/>
            <person name="Kamiya A."/>
            <person name="Meyers C."/>
            <person name="Nakajima M."/>
            <person name="Narusaka M."/>
            <person name="Seki M."/>
            <person name="Sakurai T."/>
            <person name="Satou M."/>
            <person name="Tamse R."/>
            <person name="Vaysberg M."/>
            <person name="Wallender E.K."/>
            <person name="Wong C."/>
            <person name="Yamamura Y."/>
            <person name="Yuan S."/>
            <person name="Shinozaki K."/>
            <person name="Davis R.W."/>
            <person name="Theologis A."/>
            <person name="Ecker J.R."/>
        </authorList>
    </citation>
    <scope>NUCLEOTIDE SEQUENCE [LARGE SCALE MRNA]</scope>
    <source>
        <strain>cv. Columbia</strain>
    </source>
</reference>
<reference key="4">
    <citation type="journal article" date="2006" name="Plant Physiol.">
        <title>DAWDLE, a forkhead-associated domain gene, regulates multiple aspects of plant development.</title>
        <authorList>
            <person name="Morris E.R."/>
            <person name="Chevalier D."/>
            <person name="Walker J.C."/>
        </authorList>
    </citation>
    <scope>SUBCELLULAR LOCATION</scope>
    <scope>TISSUE SPECIFICITY</scope>
    <scope>DISRUPTION PHENOTYPE</scope>
</reference>
<reference key="5">
    <citation type="journal article" date="2007" name="Mol. Cell. Proteomics">
        <title>Multidimensional protein identification technology (MudPIT) analysis of ubiquitinated proteins in plants.</title>
        <authorList>
            <person name="Maor R."/>
            <person name="Jones A."/>
            <person name="Nuehse T.S."/>
            <person name="Studholme D.J."/>
            <person name="Peck S.C."/>
            <person name="Shirasu K."/>
        </authorList>
    </citation>
    <scope>IDENTIFICATION BY MASS SPECTROMETRY [LARGE SCALE ANALYSIS]</scope>
    <source>
        <strain>cv. Landsberg erecta</strain>
    </source>
</reference>
<reference key="6">
    <citation type="journal article" date="2008" name="J. Proteome Res.">
        <title>Site-specific phosphorylation profiling of Arabidopsis proteins by mass spectrometry and peptide chip analysis.</title>
        <authorList>
            <person name="de la Fuente van Bentem S."/>
            <person name="Anrather D."/>
            <person name="Dohnal I."/>
            <person name="Roitinger E."/>
            <person name="Csaszar E."/>
            <person name="Joore J."/>
            <person name="Buijnink J."/>
            <person name="Carreri A."/>
            <person name="Forzani C."/>
            <person name="Lorkovic Z.J."/>
            <person name="Barta A."/>
            <person name="Lecourieux D."/>
            <person name="Verhounig A."/>
            <person name="Jonak C."/>
            <person name="Hirt H."/>
        </authorList>
    </citation>
    <scope>PHOSPHORYLATION [LARGE SCALE ANALYSIS] AT SER-133</scope>
    <scope>IDENTIFICATION BY MASS SPECTROMETRY [LARGE SCALE ANALYSIS]</scope>
    <source>
        <tissue>Root</tissue>
    </source>
</reference>
<reference key="7">
    <citation type="journal article" date="2008" name="Proc. Natl. Acad. Sci. U.S.A.">
        <title>The FHA domain proteins DAWDLE in Arabidopsis and SNIP1 in humans act in small RNA biogenesis.</title>
        <authorList>
            <person name="Yu B."/>
            <person name="Bi L."/>
            <person name="Zheng B."/>
            <person name="Ji L."/>
            <person name="Chevalier D."/>
            <person name="Agarwal M."/>
            <person name="Ramachandran V."/>
            <person name="Li W."/>
            <person name="Lagrange T."/>
            <person name="Walker J.C."/>
            <person name="Chen X."/>
        </authorList>
    </citation>
    <scope>FUNCTION</scope>
    <scope>DISRUPTION PHENOTYPE</scope>
    <scope>INTERACTION WITH DCL1</scope>
</reference>
<reference key="8">
    <citation type="journal article" date="2009" name="J. Proteomics">
        <title>Phosphoproteomic analysis of nuclei-enriched fractions from Arabidopsis thaliana.</title>
        <authorList>
            <person name="Jones A.M.E."/>
            <person name="MacLean D."/>
            <person name="Studholme D.J."/>
            <person name="Serna-Sanz A."/>
            <person name="Andreasson E."/>
            <person name="Rathjen J.P."/>
            <person name="Peck S.C."/>
        </authorList>
    </citation>
    <scope>PHOSPHORYLATION [LARGE SCALE ANALYSIS] AT SER-133</scope>
    <scope>IDENTIFICATION BY MASS SPECTROMETRY [LARGE SCALE ANALYSIS]</scope>
    <source>
        <strain>cv. Columbia</strain>
    </source>
</reference>
<reference key="9">
    <citation type="journal article" date="2009" name="Plant Physiol.">
        <title>Large-scale Arabidopsis phosphoproteome profiling reveals novel chloroplast kinase substrates and phosphorylation networks.</title>
        <authorList>
            <person name="Reiland S."/>
            <person name="Messerli G."/>
            <person name="Baerenfaller K."/>
            <person name="Gerrits B."/>
            <person name="Endler A."/>
            <person name="Grossmann J."/>
            <person name="Gruissem W."/>
            <person name="Baginsky S."/>
        </authorList>
    </citation>
    <scope>PHOSPHORYLATION [LARGE SCALE ANALYSIS] AT SER-133</scope>
    <scope>IDENTIFICATION BY MASS SPECTROMETRY [LARGE SCALE ANALYSIS]</scope>
</reference>
<reference key="10">
    <citation type="journal article" date="2013" name="Mol. Plant">
        <title>Crystal structure of Arabidopsis thaliana Dawdle forkhead-associated domain reveals a conserved phospho-threonine recognition cleft for dicer-like 1 binding.</title>
        <authorList>
            <person name="Machida S."/>
            <person name="Yuan Y.A."/>
        </authorList>
    </citation>
    <scope>X-RAY CRYSTALLOGRAPHY (1.70 ANGSTROMS) OF 180-310</scope>
    <scope>INTERACTION WITH DCL1</scope>
    <scope>MUTAGENESIS OF ARG-223 AND SER-238</scope>
</reference>
<feature type="chain" id="PRO_0000392079" description="FHA domain-containing protein DDL">
    <location>
        <begin position="1"/>
        <end position="314"/>
    </location>
</feature>
<feature type="domain" description="FHA" evidence="1">
    <location>
        <begin position="219"/>
        <end position="282"/>
    </location>
</feature>
<feature type="region of interest" description="Disordered" evidence="2">
    <location>
        <begin position="1"/>
        <end position="146"/>
    </location>
</feature>
<feature type="compositionally biased region" description="Low complexity" evidence="2">
    <location>
        <begin position="1"/>
        <end position="10"/>
    </location>
</feature>
<feature type="compositionally biased region" description="Basic and acidic residues" evidence="2">
    <location>
        <begin position="18"/>
        <end position="127"/>
    </location>
</feature>
<feature type="modified residue" description="Phosphoserine" evidence="7 8 9">
    <location>
        <position position="133"/>
    </location>
</feature>
<feature type="mutagenesis site" description="Loss of interaction with DCL1." evidence="5">
    <original>R</original>
    <variation>A</variation>
    <location>
        <position position="223"/>
    </location>
</feature>
<feature type="mutagenesis site" description="Loss of interaction with DCL1." evidence="5">
    <original>S</original>
    <variation>A</variation>
    <location>
        <position position="238"/>
    </location>
</feature>
<feature type="strand" evidence="10">
    <location>
        <begin position="197"/>
        <end position="202"/>
    </location>
</feature>
<feature type="strand" evidence="10">
    <location>
        <begin position="214"/>
        <end position="223"/>
    </location>
</feature>
<feature type="turn" evidence="10">
    <location>
        <begin position="225"/>
        <end position="227"/>
    </location>
</feature>
<feature type="strand" evidence="10">
    <location>
        <begin position="229"/>
        <end position="231"/>
    </location>
</feature>
<feature type="strand" evidence="10">
    <location>
        <begin position="242"/>
        <end position="252"/>
    </location>
</feature>
<feature type="strand" evidence="10">
    <location>
        <begin position="258"/>
        <end position="268"/>
    </location>
</feature>
<feature type="strand" evidence="10">
    <location>
        <begin position="275"/>
        <end position="277"/>
    </location>
</feature>
<feature type="strand" evidence="10">
    <location>
        <begin position="295"/>
        <end position="298"/>
    </location>
</feature>
<feature type="strand" evidence="10">
    <location>
        <begin position="302"/>
        <end position="308"/>
    </location>
</feature>
<comment type="function">
    <text evidence="4">Involved in the microRNA (miRNA) and short interfering RNA (siRNA) biogenesis. May facilitate DCL1 to access or recognize primary miRNAs. Binds RNA non-specifically.</text>
</comment>
<comment type="subunit">
    <text evidence="4 5">Interacts with DCL1 (via N-terminus).</text>
</comment>
<comment type="interaction">
    <interactant intactId="EBI-2015534">
        <id>Q8W4D8</id>
    </interactant>
    <interactant intactId="EBI-632627">
        <id>Q9SP32</id>
        <label>DCL1</label>
    </interactant>
    <organismsDiffer>false</organismsDiffer>
    <experiments>2</experiments>
</comment>
<comment type="interaction">
    <interactant intactId="EBI-2015534">
        <id>Q8W4D8</id>
    </interactant>
    <interactant intactId="EBI-1792336">
        <id>Q39204</id>
        <label>MYC2</label>
    </interactant>
    <organismsDiffer>false</organismsDiffer>
    <experiments>6</experiments>
</comment>
<comment type="interaction">
    <interactant intactId="EBI-2015534">
        <id>Q8W4D8</id>
    </interactant>
    <interactant intactId="EBI-1803584">
        <id>Q9LVM5</id>
        <label>TTL</label>
    </interactant>
    <organismsDiffer>false</organismsDiffer>
    <experiments>4</experiments>
</comment>
<comment type="subcellular location">
    <subcellularLocation>
        <location evidence="3">Nucleus</location>
    </subcellularLocation>
</comment>
<comment type="tissue specificity">
    <text evidence="3">Expressed in roots, lateral roots, vascular strands of roots and leaves, vegetative meristems, pollen and developing seeds.</text>
</comment>
<comment type="disruption phenotype">
    <text evidence="3 4">Delayed growth and reduced fertility. Defective roots, shoots and flowers. Reduced seed set. Reduced levels of primary miRNAs as well as mature miRNAs.</text>
</comment>
<comment type="sequence caution" evidence="6">
    <conflict type="erroneous gene model prediction">
        <sequence resource="EMBL-CDS" id="BAB01163"/>
    </conflict>
</comment>
<dbReference type="EMBL" id="AP000410">
    <property type="protein sequence ID" value="BAB01163.1"/>
    <property type="status" value="ALT_SEQ"/>
    <property type="molecule type" value="Genomic_DNA"/>
</dbReference>
<dbReference type="EMBL" id="CP002686">
    <property type="protein sequence ID" value="AEE76394.1"/>
    <property type="molecule type" value="Genomic_DNA"/>
</dbReference>
<dbReference type="EMBL" id="AY062626">
    <property type="protein sequence ID" value="AAL32704.1"/>
    <property type="molecule type" value="mRNA"/>
</dbReference>
<dbReference type="EMBL" id="BT000005">
    <property type="protein sequence ID" value="AAN15324.1"/>
    <property type="molecule type" value="mRNA"/>
</dbReference>
<dbReference type="RefSeq" id="NP_188691.1">
    <property type="nucleotide sequence ID" value="NM_112947.4"/>
</dbReference>
<dbReference type="PDB" id="3VPY">
    <property type="method" value="X-ray"/>
    <property type="resolution" value="1.70 A"/>
    <property type="chains" value="A=180-310"/>
</dbReference>
<dbReference type="PDBsum" id="3VPY"/>
<dbReference type="SMR" id="Q8W4D8"/>
<dbReference type="BioGRID" id="6933">
    <property type="interactions" value="14"/>
</dbReference>
<dbReference type="DIP" id="DIP-46412N"/>
<dbReference type="FunCoup" id="Q8W4D8">
    <property type="interactions" value="295"/>
</dbReference>
<dbReference type="IntAct" id="Q8W4D8">
    <property type="interactions" value="13"/>
</dbReference>
<dbReference type="STRING" id="3702.Q8W4D8"/>
<dbReference type="iPTMnet" id="Q8W4D8"/>
<dbReference type="PaxDb" id="3702-AT3G20550.1"/>
<dbReference type="ProteomicsDB" id="224064"/>
<dbReference type="EnsemblPlants" id="AT3G20550.1">
    <property type="protein sequence ID" value="AT3G20550.1"/>
    <property type="gene ID" value="AT3G20550"/>
</dbReference>
<dbReference type="GeneID" id="821601"/>
<dbReference type="Gramene" id="AT3G20550.1">
    <property type="protein sequence ID" value="AT3G20550.1"/>
    <property type="gene ID" value="AT3G20550"/>
</dbReference>
<dbReference type="KEGG" id="ath:AT3G20550"/>
<dbReference type="Araport" id="AT3G20550"/>
<dbReference type="TAIR" id="AT3G20550">
    <property type="gene designation" value="DDL"/>
</dbReference>
<dbReference type="eggNOG" id="KOG1882">
    <property type="taxonomic scope" value="Eukaryota"/>
</dbReference>
<dbReference type="HOGENOM" id="CLU_022457_2_1_1"/>
<dbReference type="InParanoid" id="Q8W4D8"/>
<dbReference type="OMA" id="RNDQHKQ"/>
<dbReference type="OrthoDB" id="444265at2759"/>
<dbReference type="PhylomeDB" id="Q8W4D8"/>
<dbReference type="CD-CODE" id="4299E36E">
    <property type="entry name" value="Nucleolus"/>
</dbReference>
<dbReference type="EvolutionaryTrace" id="Q8W4D8"/>
<dbReference type="PRO" id="PR:Q8W4D8"/>
<dbReference type="Proteomes" id="UP000006548">
    <property type="component" value="Chromosome 3"/>
</dbReference>
<dbReference type="ExpressionAtlas" id="Q8W4D8">
    <property type="expression patterns" value="baseline and differential"/>
</dbReference>
<dbReference type="GO" id="GO:0005634">
    <property type="term" value="C:nucleus"/>
    <property type="evidence" value="ECO:0000314"/>
    <property type="project" value="TAIR"/>
</dbReference>
<dbReference type="GO" id="GO:0003723">
    <property type="term" value="F:RNA binding"/>
    <property type="evidence" value="ECO:0000315"/>
    <property type="project" value="UniProtKB"/>
</dbReference>
<dbReference type="GO" id="GO:0051301">
    <property type="term" value="P:cell division"/>
    <property type="evidence" value="ECO:0000315"/>
    <property type="project" value="TAIR"/>
</dbReference>
<dbReference type="GO" id="GO:0035196">
    <property type="term" value="P:miRNA processing"/>
    <property type="evidence" value="ECO:0000314"/>
    <property type="project" value="TAIR"/>
</dbReference>
<dbReference type="GO" id="GO:0048638">
    <property type="term" value="P:regulation of developmental growth"/>
    <property type="evidence" value="ECO:0000315"/>
    <property type="project" value="UniProtKB"/>
</dbReference>
<dbReference type="CDD" id="cd22719">
    <property type="entry name" value="FHA_DDL-like"/>
    <property type="match status" value="1"/>
</dbReference>
<dbReference type="FunFam" id="2.60.200.20:FF:000028">
    <property type="entry name" value="FHA domain-containing protein DDL"/>
    <property type="match status" value="1"/>
</dbReference>
<dbReference type="Gene3D" id="2.60.200.20">
    <property type="match status" value="1"/>
</dbReference>
<dbReference type="InterPro" id="IPR050923">
    <property type="entry name" value="Cell_Proc_Reg/RNA_Proc"/>
</dbReference>
<dbReference type="InterPro" id="IPR000253">
    <property type="entry name" value="FHA_dom"/>
</dbReference>
<dbReference type="InterPro" id="IPR008984">
    <property type="entry name" value="SMAD_FHA_dom_sf"/>
</dbReference>
<dbReference type="PANTHER" id="PTHR23308">
    <property type="entry name" value="NUCLEAR INHIBITOR OF PROTEIN PHOSPHATASE-1"/>
    <property type="match status" value="1"/>
</dbReference>
<dbReference type="Pfam" id="PF00498">
    <property type="entry name" value="FHA"/>
    <property type="match status" value="1"/>
</dbReference>
<dbReference type="SMART" id="SM00240">
    <property type="entry name" value="FHA"/>
    <property type="match status" value="1"/>
</dbReference>
<dbReference type="SUPFAM" id="SSF49879">
    <property type="entry name" value="SMAD/FHA domain"/>
    <property type="match status" value="1"/>
</dbReference>
<dbReference type="PROSITE" id="PS50006">
    <property type="entry name" value="FHA_DOMAIN"/>
    <property type="match status" value="1"/>
</dbReference>
<sequence length="314" mass="36953">MAPSSRSPSPRTKRLRRARGEKEIGRSREREDDGREREKRNSRERDRDIGRDRDRERKGEGERDREVGDKRRRSGREDTEKRRRTRTDDERYSRGRHERSTSPSDRSHRSSRRSPERAIASRHDEGSNARGGSEEPNVEEDSVARMRAVEEALAAKKKEEPSFELSGKLAEETNRYRGITLLFNEPPEARKPSERWRLYVFKDGEPLNEPLCLHRQSCYLFGRERRIADIPTDHPSCSKQHAVIQYREMEKEKPDGMMGKQVKPYIMDLGSTNKTYINESPIEPQRYYELFEKDTIKFGNSSREYVLLHENSAE</sequence>
<gene>
    <name type="primary">DDL</name>
    <name type="ordered locus">At3g20550</name>
    <name type="ORF">K10D20.9</name>
</gene>
<evidence type="ECO:0000255" key="1">
    <source>
        <dbReference type="PROSITE-ProRule" id="PRU00086"/>
    </source>
</evidence>
<evidence type="ECO:0000256" key="2">
    <source>
        <dbReference type="SAM" id="MobiDB-lite"/>
    </source>
</evidence>
<evidence type="ECO:0000269" key="3">
    <source>
    </source>
</evidence>
<evidence type="ECO:0000269" key="4">
    <source>
    </source>
</evidence>
<evidence type="ECO:0000269" key="5">
    <source>
    </source>
</evidence>
<evidence type="ECO:0000305" key="6"/>
<evidence type="ECO:0007744" key="7">
    <source>
    </source>
</evidence>
<evidence type="ECO:0007744" key="8">
    <source>
    </source>
</evidence>
<evidence type="ECO:0007744" key="9">
    <source>
    </source>
</evidence>
<evidence type="ECO:0007829" key="10">
    <source>
        <dbReference type="PDB" id="3VPY"/>
    </source>
</evidence>
<name>DDL_ARATH</name>
<keyword id="KW-0002">3D-structure</keyword>
<keyword id="KW-0539">Nucleus</keyword>
<keyword id="KW-0597">Phosphoprotein</keyword>
<keyword id="KW-1185">Reference proteome</keyword>
<keyword id="KW-0694">RNA-binding</keyword>
<keyword id="KW-0943">RNA-mediated gene silencing</keyword>
<proteinExistence type="evidence at protein level"/>